<feature type="chain" id="PRO_0000098037" description="Urease subunit gamma">
    <location>
        <begin position="1"/>
        <end position="100"/>
    </location>
</feature>
<organism>
    <name type="scientific">Cereibacter sphaeroides (strain ATCC 17023 / DSM 158 / JCM 6121 / CCUG 31486 / LMG 2827 / NBRC 12203 / NCIMB 8253 / ATH 2.4.1.)</name>
    <name type="common">Rhodobacter sphaeroides</name>
    <dbReference type="NCBI Taxonomy" id="272943"/>
    <lineage>
        <taxon>Bacteria</taxon>
        <taxon>Pseudomonadati</taxon>
        <taxon>Pseudomonadota</taxon>
        <taxon>Alphaproteobacteria</taxon>
        <taxon>Rhodobacterales</taxon>
        <taxon>Paracoccaceae</taxon>
        <taxon>Cereibacter</taxon>
    </lineage>
</organism>
<keyword id="KW-0963">Cytoplasm</keyword>
<keyword id="KW-0378">Hydrolase</keyword>
<keyword id="KW-1185">Reference proteome</keyword>
<accession>Q9RFF5</accession>
<accession>Q3J150</accession>
<sequence>MNLTPREKDKLLISLAAIVARGRLERGVKLNHPEAVALISDFVVEGAREGRSVADLMQAGAHVVRAENCMEGVPEMLHSVQVEATFPDGTKLVTVHHPIR</sequence>
<protein>
    <recommendedName>
        <fullName evidence="1">Urease subunit gamma</fullName>
        <ecNumber evidence="1">3.5.1.5</ecNumber>
    </recommendedName>
    <alternativeName>
        <fullName evidence="1">Urea amidohydrolase subunit gamma</fullName>
    </alternativeName>
</protein>
<reference key="1">
    <citation type="journal article" date="2000" name="Nucleic Acids Res.">
        <title>DNA sequence analysis of the photosynthesis region of Rhodobacter sphaeroides 2.4.1.</title>
        <authorList>
            <person name="Choudhary M."/>
            <person name="Kaplan S."/>
        </authorList>
    </citation>
    <scope>NUCLEOTIDE SEQUENCE [GENOMIC DNA]</scope>
</reference>
<reference key="2">
    <citation type="submission" date="2005-09" db="EMBL/GenBank/DDBJ databases">
        <title>Complete sequence of chromosome 1 of Rhodobacter sphaeroides 2.4.1.</title>
        <authorList>
            <person name="Copeland A."/>
            <person name="Lucas S."/>
            <person name="Lapidus A."/>
            <person name="Barry K."/>
            <person name="Detter J.C."/>
            <person name="Glavina T."/>
            <person name="Hammon N."/>
            <person name="Israni S."/>
            <person name="Pitluck S."/>
            <person name="Richardson P."/>
            <person name="Mackenzie C."/>
            <person name="Choudhary M."/>
            <person name="Larimer F."/>
            <person name="Hauser L.J."/>
            <person name="Land M."/>
            <person name="Donohue T.J."/>
            <person name="Kaplan S."/>
        </authorList>
    </citation>
    <scope>NUCLEOTIDE SEQUENCE [LARGE SCALE GENOMIC DNA]</scope>
    <source>
        <strain>ATCC 17023 / DSM 158 / JCM 6121 / CCUG 31486 / LMG 2827 / NBRC 12203 / NCIMB 8253 / ATH 2.4.1.</strain>
    </source>
</reference>
<name>URE3_CERS4</name>
<gene>
    <name evidence="1" type="primary">ureA</name>
    <name type="ordered locus">RHOS4_19160</name>
    <name type="ORF">RSP_0309</name>
</gene>
<proteinExistence type="inferred from homology"/>
<dbReference type="EC" id="3.5.1.5" evidence="1"/>
<dbReference type="EMBL" id="AF195122">
    <property type="protein sequence ID" value="AAF24252.1"/>
    <property type="molecule type" value="Genomic_DNA"/>
</dbReference>
<dbReference type="EMBL" id="CP000143">
    <property type="protein sequence ID" value="ABA79484.1"/>
    <property type="molecule type" value="Genomic_DNA"/>
</dbReference>
<dbReference type="PIR" id="T50708">
    <property type="entry name" value="T50708"/>
</dbReference>
<dbReference type="RefSeq" id="WP_002720475.1">
    <property type="nucleotide sequence ID" value="NZ_CP030271.1"/>
</dbReference>
<dbReference type="RefSeq" id="YP_353385.1">
    <property type="nucleotide sequence ID" value="NC_007493.2"/>
</dbReference>
<dbReference type="SMR" id="Q9RFF5"/>
<dbReference type="STRING" id="272943.RSP_0309"/>
<dbReference type="EnsemblBacteria" id="ABA79484">
    <property type="protein sequence ID" value="ABA79484"/>
    <property type="gene ID" value="RSP_0309"/>
</dbReference>
<dbReference type="KEGG" id="rsp:RSP_0309"/>
<dbReference type="PATRIC" id="fig|272943.9.peg.2256"/>
<dbReference type="eggNOG" id="COG0831">
    <property type="taxonomic scope" value="Bacteria"/>
</dbReference>
<dbReference type="OrthoDB" id="9797217at2"/>
<dbReference type="PhylomeDB" id="Q9RFF5"/>
<dbReference type="UniPathway" id="UPA00258">
    <property type="reaction ID" value="UER00370"/>
</dbReference>
<dbReference type="Proteomes" id="UP000002703">
    <property type="component" value="Chromosome 1"/>
</dbReference>
<dbReference type="GO" id="GO:0005737">
    <property type="term" value="C:cytoplasm"/>
    <property type="evidence" value="ECO:0007669"/>
    <property type="project" value="UniProtKB-SubCell"/>
</dbReference>
<dbReference type="GO" id="GO:0016151">
    <property type="term" value="F:nickel cation binding"/>
    <property type="evidence" value="ECO:0007669"/>
    <property type="project" value="InterPro"/>
</dbReference>
<dbReference type="GO" id="GO:0009039">
    <property type="term" value="F:urease activity"/>
    <property type="evidence" value="ECO:0007669"/>
    <property type="project" value="UniProtKB-UniRule"/>
</dbReference>
<dbReference type="GO" id="GO:0043419">
    <property type="term" value="P:urea catabolic process"/>
    <property type="evidence" value="ECO:0007669"/>
    <property type="project" value="UniProtKB-UniRule"/>
</dbReference>
<dbReference type="CDD" id="cd00390">
    <property type="entry name" value="Urease_gamma"/>
    <property type="match status" value="1"/>
</dbReference>
<dbReference type="Gene3D" id="3.30.280.10">
    <property type="entry name" value="Urease, gamma-like subunit"/>
    <property type="match status" value="1"/>
</dbReference>
<dbReference type="HAMAP" id="MF_00739">
    <property type="entry name" value="Urease_gamma"/>
    <property type="match status" value="1"/>
</dbReference>
<dbReference type="InterPro" id="IPR012010">
    <property type="entry name" value="Urease_gamma"/>
</dbReference>
<dbReference type="InterPro" id="IPR002026">
    <property type="entry name" value="Urease_gamma/gamma-beta_su"/>
</dbReference>
<dbReference type="InterPro" id="IPR036463">
    <property type="entry name" value="Urease_gamma_sf"/>
</dbReference>
<dbReference type="InterPro" id="IPR050069">
    <property type="entry name" value="Urease_subunit"/>
</dbReference>
<dbReference type="NCBIfam" id="NF009712">
    <property type="entry name" value="PRK13241.1"/>
    <property type="match status" value="1"/>
</dbReference>
<dbReference type="NCBIfam" id="TIGR00193">
    <property type="entry name" value="urease_gam"/>
    <property type="match status" value="1"/>
</dbReference>
<dbReference type="PANTHER" id="PTHR33569">
    <property type="entry name" value="UREASE"/>
    <property type="match status" value="1"/>
</dbReference>
<dbReference type="PANTHER" id="PTHR33569:SF1">
    <property type="entry name" value="UREASE"/>
    <property type="match status" value="1"/>
</dbReference>
<dbReference type="Pfam" id="PF00547">
    <property type="entry name" value="Urease_gamma"/>
    <property type="match status" value="1"/>
</dbReference>
<dbReference type="PIRSF" id="PIRSF001223">
    <property type="entry name" value="Urease_gamma"/>
    <property type="match status" value="1"/>
</dbReference>
<dbReference type="SUPFAM" id="SSF54111">
    <property type="entry name" value="Urease, gamma-subunit"/>
    <property type="match status" value="1"/>
</dbReference>
<evidence type="ECO:0000255" key="1">
    <source>
        <dbReference type="HAMAP-Rule" id="MF_00739"/>
    </source>
</evidence>
<comment type="catalytic activity">
    <reaction evidence="1">
        <text>urea + 2 H2O + H(+) = hydrogencarbonate + 2 NH4(+)</text>
        <dbReference type="Rhea" id="RHEA:20557"/>
        <dbReference type="ChEBI" id="CHEBI:15377"/>
        <dbReference type="ChEBI" id="CHEBI:15378"/>
        <dbReference type="ChEBI" id="CHEBI:16199"/>
        <dbReference type="ChEBI" id="CHEBI:17544"/>
        <dbReference type="ChEBI" id="CHEBI:28938"/>
        <dbReference type="EC" id="3.5.1.5"/>
    </reaction>
</comment>
<comment type="pathway">
    <text evidence="1">Nitrogen metabolism; urea degradation; CO(2) and NH(3) from urea (urease route): step 1/1.</text>
</comment>
<comment type="subunit">
    <text evidence="1">Heterotrimer of UreA (gamma), UreB (beta) and UreC (alpha) subunits. Three heterotrimers associate to form the active enzyme.</text>
</comment>
<comment type="subcellular location">
    <subcellularLocation>
        <location evidence="1">Cytoplasm</location>
    </subcellularLocation>
</comment>
<comment type="similarity">
    <text evidence="1">Belongs to the urease gamma subunit family.</text>
</comment>